<proteinExistence type="inferred from homology"/>
<organism>
    <name type="scientific">Psychromonas ingrahamii (strain DSM 17664 / CCUG 51855 / 37)</name>
    <dbReference type="NCBI Taxonomy" id="357804"/>
    <lineage>
        <taxon>Bacteria</taxon>
        <taxon>Pseudomonadati</taxon>
        <taxon>Pseudomonadota</taxon>
        <taxon>Gammaproteobacteria</taxon>
        <taxon>Alteromonadales</taxon>
        <taxon>Psychromonadaceae</taxon>
        <taxon>Psychromonas</taxon>
    </lineage>
</organism>
<name>EFTS_PSYIN</name>
<gene>
    <name evidence="1" type="primary">tsf</name>
    <name type="ordered locus">Ping_2975</name>
</gene>
<evidence type="ECO:0000255" key="1">
    <source>
        <dbReference type="HAMAP-Rule" id="MF_00050"/>
    </source>
</evidence>
<comment type="function">
    <text evidence="1">Associates with the EF-Tu.GDP complex and induces the exchange of GDP to GTP. It remains bound to the aminoacyl-tRNA.EF-Tu.GTP complex up to the GTP hydrolysis stage on the ribosome.</text>
</comment>
<comment type="subcellular location">
    <subcellularLocation>
        <location evidence="1">Cytoplasm</location>
    </subcellularLocation>
</comment>
<comment type="similarity">
    <text evidence="1">Belongs to the EF-Ts family.</text>
</comment>
<accession>A1SYW2</accession>
<feature type="chain" id="PRO_0000323463" description="Elongation factor Ts">
    <location>
        <begin position="1"/>
        <end position="292"/>
    </location>
</feature>
<feature type="region of interest" description="Involved in Mg(2+) ion dislocation from EF-Tu" evidence="1">
    <location>
        <begin position="81"/>
        <end position="84"/>
    </location>
</feature>
<sequence length="292" mass="30648">MAITVTAKQVKELRDRTAAGMMDCKKALVEAEGDLELAIENMRKSGAVKAAKKAGRVAAEGVILAKVEGSVALLAEVNCETDFVAMDKSFLAFANKIAEIALANKVASVEALNELAYDGDTVEVARANLVSKIGENISIRRLHIVEGENLGAYVHSGKIGVISVLKGGDADLSKDIAMHVAAAAPQYVKAEDVPADVVAKEKEIQLAIAVESGKPEAIAEKMVAGRMAKFSGEVSLTSQPFIKDPSIKVAKLLKDAGAEVISFIRLEVGEGIDKKVEDFAAEVAATMAASAK</sequence>
<dbReference type="EMBL" id="CP000510">
    <property type="protein sequence ID" value="ABM04677.1"/>
    <property type="molecule type" value="Genomic_DNA"/>
</dbReference>
<dbReference type="SMR" id="A1SYW2"/>
<dbReference type="STRING" id="357804.Ping_2975"/>
<dbReference type="KEGG" id="pin:Ping_2975"/>
<dbReference type="eggNOG" id="COG0264">
    <property type="taxonomic scope" value="Bacteria"/>
</dbReference>
<dbReference type="HOGENOM" id="CLU_047155_0_2_6"/>
<dbReference type="OrthoDB" id="9808348at2"/>
<dbReference type="Proteomes" id="UP000000639">
    <property type="component" value="Chromosome"/>
</dbReference>
<dbReference type="GO" id="GO:0005737">
    <property type="term" value="C:cytoplasm"/>
    <property type="evidence" value="ECO:0007669"/>
    <property type="project" value="UniProtKB-SubCell"/>
</dbReference>
<dbReference type="GO" id="GO:0003746">
    <property type="term" value="F:translation elongation factor activity"/>
    <property type="evidence" value="ECO:0007669"/>
    <property type="project" value="UniProtKB-UniRule"/>
</dbReference>
<dbReference type="CDD" id="cd14275">
    <property type="entry name" value="UBA_EF-Ts"/>
    <property type="match status" value="1"/>
</dbReference>
<dbReference type="FunFam" id="1.10.286.20:FF:000001">
    <property type="entry name" value="Elongation factor Ts"/>
    <property type="match status" value="1"/>
</dbReference>
<dbReference type="FunFam" id="1.10.8.10:FF:000001">
    <property type="entry name" value="Elongation factor Ts"/>
    <property type="match status" value="1"/>
</dbReference>
<dbReference type="FunFam" id="3.30.479.20:FF:000001">
    <property type="entry name" value="Elongation factor Ts"/>
    <property type="match status" value="1"/>
</dbReference>
<dbReference type="Gene3D" id="1.10.286.20">
    <property type="match status" value="1"/>
</dbReference>
<dbReference type="Gene3D" id="1.10.8.10">
    <property type="entry name" value="DNA helicase RuvA subunit, C-terminal domain"/>
    <property type="match status" value="1"/>
</dbReference>
<dbReference type="Gene3D" id="3.30.479.20">
    <property type="entry name" value="Elongation factor Ts, dimerisation domain"/>
    <property type="match status" value="2"/>
</dbReference>
<dbReference type="HAMAP" id="MF_00050">
    <property type="entry name" value="EF_Ts"/>
    <property type="match status" value="1"/>
</dbReference>
<dbReference type="InterPro" id="IPR036402">
    <property type="entry name" value="EF-Ts_dimer_sf"/>
</dbReference>
<dbReference type="InterPro" id="IPR001816">
    <property type="entry name" value="Transl_elong_EFTs/EF1B"/>
</dbReference>
<dbReference type="InterPro" id="IPR014039">
    <property type="entry name" value="Transl_elong_EFTs/EF1B_dimer"/>
</dbReference>
<dbReference type="InterPro" id="IPR009060">
    <property type="entry name" value="UBA-like_sf"/>
</dbReference>
<dbReference type="NCBIfam" id="TIGR00116">
    <property type="entry name" value="tsf"/>
    <property type="match status" value="1"/>
</dbReference>
<dbReference type="PANTHER" id="PTHR11741">
    <property type="entry name" value="ELONGATION FACTOR TS"/>
    <property type="match status" value="1"/>
</dbReference>
<dbReference type="PANTHER" id="PTHR11741:SF0">
    <property type="entry name" value="ELONGATION FACTOR TS, MITOCHONDRIAL"/>
    <property type="match status" value="1"/>
</dbReference>
<dbReference type="Pfam" id="PF00889">
    <property type="entry name" value="EF_TS"/>
    <property type="match status" value="1"/>
</dbReference>
<dbReference type="SUPFAM" id="SSF54713">
    <property type="entry name" value="Elongation factor Ts (EF-Ts), dimerisation domain"/>
    <property type="match status" value="2"/>
</dbReference>
<dbReference type="SUPFAM" id="SSF46934">
    <property type="entry name" value="UBA-like"/>
    <property type="match status" value="1"/>
</dbReference>
<keyword id="KW-0963">Cytoplasm</keyword>
<keyword id="KW-0251">Elongation factor</keyword>
<keyword id="KW-0648">Protein biosynthesis</keyword>
<keyword id="KW-1185">Reference proteome</keyword>
<reference key="1">
    <citation type="journal article" date="2008" name="BMC Genomics">
        <title>Genomics of an extreme psychrophile, Psychromonas ingrahamii.</title>
        <authorList>
            <person name="Riley M."/>
            <person name="Staley J.T."/>
            <person name="Danchin A."/>
            <person name="Wang T.Z."/>
            <person name="Brettin T.S."/>
            <person name="Hauser L.J."/>
            <person name="Land M.L."/>
            <person name="Thompson L.S."/>
        </authorList>
    </citation>
    <scope>NUCLEOTIDE SEQUENCE [LARGE SCALE GENOMIC DNA]</scope>
    <source>
        <strain>DSM 17664 / CCUG 51855 / 37</strain>
    </source>
</reference>
<protein>
    <recommendedName>
        <fullName evidence="1">Elongation factor Ts</fullName>
        <shortName evidence="1">EF-Ts</shortName>
    </recommendedName>
</protein>